<feature type="chain" id="PRO_0000076870" description="3-isopropylmalate dehydratase large subunit 1">
    <location>
        <begin position="1"/>
        <end position="418"/>
    </location>
</feature>
<feature type="binding site" evidence="1">
    <location>
        <position position="298"/>
    </location>
    <ligand>
        <name>[4Fe-4S] cluster</name>
        <dbReference type="ChEBI" id="CHEBI:49883"/>
    </ligand>
</feature>
<feature type="binding site" evidence="1">
    <location>
        <position position="358"/>
    </location>
    <ligand>
        <name>[4Fe-4S] cluster</name>
        <dbReference type="ChEBI" id="CHEBI:49883"/>
    </ligand>
</feature>
<feature type="binding site" evidence="1">
    <location>
        <position position="361"/>
    </location>
    <ligand>
        <name>[4Fe-4S] cluster</name>
        <dbReference type="ChEBI" id="CHEBI:49883"/>
    </ligand>
</feature>
<sequence>MGKTMAEKILSRASGEDAEAGDIVVANIDVAMVHDITGPITVQRLEEMGVERVWDPSKIVVLFDHQVPADSVEAAENHKIMREFVEEQGIEHFYDVREGVCHQVLPEKGHVRPGDVIVGADSHTCTHGALGAFATGIGSTDMAAVFATGKLWFRVPETYRVEITGELPEGVYAKDVVLKVTGEIGADGATYMAIEYHGEVVREMSVSDRMCLCNMAIEMGAKTGMVPPDEKTLEYVKKRAGTEGRPVEPDPDARYEAELTLDVSDLEPQVAKPFSPDNVVPVGEVEGIAIDQVFIGSCTNGRYEDLKVAAEVLEGEEVHDDVRLIVIPASREVYHRTLKDGVLEVLHEAGALICPPNCGPCLGGHMGVLAEGERCVATSNRNFPGRMGHRESEVYLASPATAAASAIEGEITDPRPYL</sequence>
<organism>
    <name type="scientific">Methanopyrus kandleri (strain AV19 / DSM 6324 / JCM 9639 / NBRC 100938)</name>
    <dbReference type="NCBI Taxonomy" id="190192"/>
    <lineage>
        <taxon>Archaea</taxon>
        <taxon>Methanobacteriati</taxon>
        <taxon>Methanobacteriota</taxon>
        <taxon>Methanomada group</taxon>
        <taxon>Methanopyri</taxon>
        <taxon>Methanopyrales</taxon>
        <taxon>Methanopyraceae</taxon>
        <taxon>Methanopyrus</taxon>
    </lineage>
</organism>
<evidence type="ECO:0000255" key="1">
    <source>
        <dbReference type="HAMAP-Rule" id="MF_01027"/>
    </source>
</evidence>
<keyword id="KW-0004">4Fe-4S</keyword>
<keyword id="KW-0028">Amino-acid biosynthesis</keyword>
<keyword id="KW-0100">Branched-chain amino acid biosynthesis</keyword>
<keyword id="KW-0408">Iron</keyword>
<keyword id="KW-0411">Iron-sulfur</keyword>
<keyword id="KW-0432">Leucine biosynthesis</keyword>
<keyword id="KW-0456">Lyase</keyword>
<keyword id="KW-0479">Metal-binding</keyword>
<keyword id="KW-1185">Reference proteome</keyword>
<accession>Q8TVF2</accession>
<proteinExistence type="inferred from homology"/>
<name>LEUC1_METKA</name>
<protein>
    <recommendedName>
        <fullName evidence="1">3-isopropylmalate dehydratase large subunit 1</fullName>
        <ecNumber evidence="1">4.2.1.33</ecNumber>
    </recommendedName>
    <alternativeName>
        <fullName evidence="1">Alpha-IPM isomerase 1</fullName>
        <shortName evidence="1">IPMI 1</shortName>
    </alternativeName>
    <alternativeName>
        <fullName evidence="1">Isopropylmalate isomerase 1</fullName>
    </alternativeName>
</protein>
<dbReference type="EC" id="4.2.1.33" evidence="1"/>
<dbReference type="EMBL" id="AE009439">
    <property type="protein sequence ID" value="AAM02653.1"/>
    <property type="molecule type" value="Genomic_DNA"/>
</dbReference>
<dbReference type="RefSeq" id="WP_011019808.1">
    <property type="nucleotide sequence ID" value="NC_003551.1"/>
</dbReference>
<dbReference type="SMR" id="Q8TVF2"/>
<dbReference type="FunCoup" id="Q8TVF2">
    <property type="interactions" value="167"/>
</dbReference>
<dbReference type="STRING" id="190192.MK1440"/>
<dbReference type="PaxDb" id="190192-MK1440"/>
<dbReference type="EnsemblBacteria" id="AAM02653">
    <property type="protein sequence ID" value="AAM02653"/>
    <property type="gene ID" value="MK1440"/>
</dbReference>
<dbReference type="GeneID" id="1478035"/>
<dbReference type="KEGG" id="mka:MK1440"/>
<dbReference type="PATRIC" id="fig|190192.8.peg.1596"/>
<dbReference type="HOGENOM" id="CLU_006714_3_4_2"/>
<dbReference type="InParanoid" id="Q8TVF2"/>
<dbReference type="OrthoDB" id="255at2157"/>
<dbReference type="UniPathway" id="UPA00048">
    <property type="reaction ID" value="UER00071"/>
</dbReference>
<dbReference type="Proteomes" id="UP000001826">
    <property type="component" value="Chromosome"/>
</dbReference>
<dbReference type="GO" id="GO:0003861">
    <property type="term" value="F:3-isopropylmalate dehydratase activity"/>
    <property type="evidence" value="ECO:0007669"/>
    <property type="project" value="UniProtKB-UniRule"/>
</dbReference>
<dbReference type="GO" id="GO:0051539">
    <property type="term" value="F:4 iron, 4 sulfur cluster binding"/>
    <property type="evidence" value="ECO:0007669"/>
    <property type="project" value="UniProtKB-KW"/>
</dbReference>
<dbReference type="GO" id="GO:0046872">
    <property type="term" value="F:metal ion binding"/>
    <property type="evidence" value="ECO:0007669"/>
    <property type="project" value="UniProtKB-KW"/>
</dbReference>
<dbReference type="GO" id="GO:0009098">
    <property type="term" value="P:L-leucine biosynthetic process"/>
    <property type="evidence" value="ECO:0007669"/>
    <property type="project" value="UniProtKB-UniRule"/>
</dbReference>
<dbReference type="CDD" id="cd01583">
    <property type="entry name" value="IPMI"/>
    <property type="match status" value="1"/>
</dbReference>
<dbReference type="Gene3D" id="3.30.499.10">
    <property type="entry name" value="Aconitase, domain 3"/>
    <property type="match status" value="2"/>
</dbReference>
<dbReference type="HAMAP" id="MF_01027">
    <property type="entry name" value="LeuC_type2"/>
    <property type="match status" value="1"/>
</dbReference>
<dbReference type="InterPro" id="IPR015931">
    <property type="entry name" value="Acnase/IPM_dHydase_lsu_aba_1/3"/>
</dbReference>
<dbReference type="InterPro" id="IPR001030">
    <property type="entry name" value="Acoase/IPM_deHydtase_lsu_aba"/>
</dbReference>
<dbReference type="InterPro" id="IPR018136">
    <property type="entry name" value="Aconitase_4Fe-4S_BS"/>
</dbReference>
<dbReference type="InterPro" id="IPR036008">
    <property type="entry name" value="Aconitase_4Fe-4S_dom"/>
</dbReference>
<dbReference type="InterPro" id="IPR011826">
    <property type="entry name" value="HAcnase/IPMdehydase_lsu_prok"/>
</dbReference>
<dbReference type="InterPro" id="IPR006251">
    <property type="entry name" value="Homoacnase/IPMdehydase_lsu"/>
</dbReference>
<dbReference type="InterPro" id="IPR050067">
    <property type="entry name" value="IPM_dehydratase_rel_enz"/>
</dbReference>
<dbReference type="InterPro" id="IPR033941">
    <property type="entry name" value="IPMI_cat"/>
</dbReference>
<dbReference type="NCBIfam" id="TIGR01343">
    <property type="entry name" value="hacA_fam"/>
    <property type="match status" value="1"/>
</dbReference>
<dbReference type="NCBIfam" id="NF040615">
    <property type="entry name" value="HacA_Meth"/>
    <property type="match status" value="1"/>
</dbReference>
<dbReference type="NCBIfam" id="TIGR02086">
    <property type="entry name" value="IPMI_arch"/>
    <property type="match status" value="1"/>
</dbReference>
<dbReference type="NCBIfam" id="NF001614">
    <property type="entry name" value="PRK00402.1"/>
    <property type="match status" value="1"/>
</dbReference>
<dbReference type="PANTHER" id="PTHR43822:SF2">
    <property type="entry name" value="HOMOACONITASE, MITOCHONDRIAL"/>
    <property type="match status" value="1"/>
</dbReference>
<dbReference type="PANTHER" id="PTHR43822">
    <property type="entry name" value="HOMOACONITASE, MITOCHONDRIAL-RELATED"/>
    <property type="match status" value="1"/>
</dbReference>
<dbReference type="Pfam" id="PF00330">
    <property type="entry name" value="Aconitase"/>
    <property type="match status" value="2"/>
</dbReference>
<dbReference type="PRINTS" id="PR00415">
    <property type="entry name" value="ACONITASE"/>
</dbReference>
<dbReference type="SUPFAM" id="SSF53732">
    <property type="entry name" value="Aconitase iron-sulfur domain"/>
    <property type="match status" value="1"/>
</dbReference>
<dbReference type="PROSITE" id="PS00450">
    <property type="entry name" value="ACONITASE_1"/>
    <property type="match status" value="1"/>
</dbReference>
<gene>
    <name evidence="1" type="primary">leuC1</name>
    <name type="ordered locus">MK1440</name>
</gene>
<comment type="function">
    <text evidence="1">Catalyzes the isomerization between 2-isopropylmalate and 3-isopropylmalate, via the formation of 2-isopropylmaleate.</text>
</comment>
<comment type="catalytic activity">
    <reaction evidence="1">
        <text>(2R,3S)-3-isopropylmalate = (2S)-2-isopropylmalate</text>
        <dbReference type="Rhea" id="RHEA:32287"/>
        <dbReference type="ChEBI" id="CHEBI:1178"/>
        <dbReference type="ChEBI" id="CHEBI:35121"/>
        <dbReference type="EC" id="4.2.1.33"/>
    </reaction>
</comment>
<comment type="cofactor">
    <cofactor evidence="1">
        <name>[4Fe-4S] cluster</name>
        <dbReference type="ChEBI" id="CHEBI:49883"/>
    </cofactor>
    <text evidence="1">Binds 1 [4Fe-4S] cluster per subunit.</text>
</comment>
<comment type="pathway">
    <text evidence="1">Amino-acid biosynthesis; L-leucine biosynthesis; L-leucine from 3-methyl-2-oxobutanoate: step 2/4.</text>
</comment>
<comment type="subunit">
    <text evidence="1">Heterodimer of LeuC and LeuD.</text>
</comment>
<comment type="similarity">
    <text evidence="1">Belongs to the aconitase/IPM isomerase family. LeuC type 2 subfamily.</text>
</comment>
<reference key="1">
    <citation type="journal article" date="2002" name="Proc. Natl. Acad. Sci. U.S.A.">
        <title>The complete genome of hyperthermophile Methanopyrus kandleri AV19 and monophyly of archaeal methanogens.</title>
        <authorList>
            <person name="Slesarev A.I."/>
            <person name="Mezhevaya K.V."/>
            <person name="Makarova K.S."/>
            <person name="Polushin N.N."/>
            <person name="Shcherbinina O.V."/>
            <person name="Shakhova V.V."/>
            <person name="Belova G.I."/>
            <person name="Aravind L."/>
            <person name="Natale D.A."/>
            <person name="Rogozin I.B."/>
            <person name="Tatusov R.L."/>
            <person name="Wolf Y.I."/>
            <person name="Stetter K.O."/>
            <person name="Malykh A.G."/>
            <person name="Koonin E.V."/>
            <person name="Kozyavkin S.A."/>
        </authorList>
    </citation>
    <scope>NUCLEOTIDE SEQUENCE [LARGE SCALE GENOMIC DNA]</scope>
    <source>
        <strain>AV19 / DSM 6324 / JCM 9639 / NBRC 100938</strain>
    </source>
</reference>